<proteinExistence type="inferred from homology"/>
<feature type="chain" id="PRO_1000101044" description="Large ribosomal subunit protein bL36">
    <location>
        <begin position="1"/>
        <end position="41"/>
    </location>
</feature>
<feature type="region of interest" description="Disordered" evidence="2">
    <location>
        <begin position="1"/>
        <end position="21"/>
    </location>
</feature>
<evidence type="ECO:0000255" key="1">
    <source>
        <dbReference type="HAMAP-Rule" id="MF_00251"/>
    </source>
</evidence>
<evidence type="ECO:0000256" key="2">
    <source>
        <dbReference type="SAM" id="MobiDB-lite"/>
    </source>
</evidence>
<evidence type="ECO:0000305" key="3"/>
<organism>
    <name type="scientific">Methylobacterium sp. (strain 4-46)</name>
    <dbReference type="NCBI Taxonomy" id="426117"/>
    <lineage>
        <taxon>Bacteria</taxon>
        <taxon>Pseudomonadati</taxon>
        <taxon>Pseudomonadota</taxon>
        <taxon>Alphaproteobacteria</taxon>
        <taxon>Hyphomicrobiales</taxon>
        <taxon>Methylobacteriaceae</taxon>
        <taxon>Methylobacterium</taxon>
    </lineage>
</organism>
<reference key="1">
    <citation type="submission" date="2008-02" db="EMBL/GenBank/DDBJ databases">
        <title>Complete sequence of chromosome of Methylobacterium sp. 4-46.</title>
        <authorList>
            <consortium name="US DOE Joint Genome Institute"/>
            <person name="Copeland A."/>
            <person name="Lucas S."/>
            <person name="Lapidus A."/>
            <person name="Glavina del Rio T."/>
            <person name="Dalin E."/>
            <person name="Tice H."/>
            <person name="Bruce D."/>
            <person name="Goodwin L."/>
            <person name="Pitluck S."/>
            <person name="Chertkov O."/>
            <person name="Brettin T."/>
            <person name="Detter J.C."/>
            <person name="Han C."/>
            <person name="Kuske C.R."/>
            <person name="Schmutz J."/>
            <person name="Larimer F."/>
            <person name="Land M."/>
            <person name="Hauser L."/>
            <person name="Kyrpides N."/>
            <person name="Ivanova N."/>
            <person name="Marx C.J."/>
            <person name="Richardson P."/>
        </authorList>
    </citation>
    <scope>NUCLEOTIDE SEQUENCE [LARGE SCALE GENOMIC DNA]</scope>
    <source>
        <strain>4-46</strain>
    </source>
</reference>
<protein>
    <recommendedName>
        <fullName evidence="1">Large ribosomal subunit protein bL36</fullName>
    </recommendedName>
    <alternativeName>
        <fullName evidence="3">50S ribosomal protein L36</fullName>
    </alternativeName>
</protein>
<dbReference type="EMBL" id="CP000943">
    <property type="protein sequence ID" value="ACA19535.1"/>
    <property type="molecule type" value="Genomic_DNA"/>
</dbReference>
<dbReference type="SMR" id="B0ULQ6"/>
<dbReference type="STRING" id="426117.M446_5210"/>
<dbReference type="KEGG" id="met:M446_5210"/>
<dbReference type="eggNOG" id="COG0257">
    <property type="taxonomic scope" value="Bacteria"/>
</dbReference>
<dbReference type="HOGENOM" id="CLU_135723_3_2_5"/>
<dbReference type="GO" id="GO:1990904">
    <property type="term" value="C:ribonucleoprotein complex"/>
    <property type="evidence" value="ECO:0007669"/>
    <property type="project" value="UniProtKB-KW"/>
</dbReference>
<dbReference type="GO" id="GO:0005840">
    <property type="term" value="C:ribosome"/>
    <property type="evidence" value="ECO:0007669"/>
    <property type="project" value="UniProtKB-KW"/>
</dbReference>
<dbReference type="GO" id="GO:0003735">
    <property type="term" value="F:structural constituent of ribosome"/>
    <property type="evidence" value="ECO:0007669"/>
    <property type="project" value="InterPro"/>
</dbReference>
<dbReference type="GO" id="GO:0006412">
    <property type="term" value="P:translation"/>
    <property type="evidence" value="ECO:0007669"/>
    <property type="project" value="UniProtKB-UniRule"/>
</dbReference>
<dbReference type="HAMAP" id="MF_00251">
    <property type="entry name" value="Ribosomal_bL36"/>
    <property type="match status" value="1"/>
</dbReference>
<dbReference type="InterPro" id="IPR000473">
    <property type="entry name" value="Ribosomal_bL36"/>
</dbReference>
<dbReference type="InterPro" id="IPR035977">
    <property type="entry name" value="Ribosomal_bL36_sp"/>
</dbReference>
<dbReference type="InterPro" id="IPR047621">
    <property type="entry name" value="Ribosomal_L36_bact"/>
</dbReference>
<dbReference type="NCBIfam" id="NF002021">
    <property type="entry name" value="PRK00831.1"/>
    <property type="match status" value="1"/>
</dbReference>
<dbReference type="NCBIfam" id="TIGR01022">
    <property type="entry name" value="rpmJ_bact"/>
    <property type="match status" value="1"/>
</dbReference>
<dbReference type="PANTHER" id="PTHR47781">
    <property type="entry name" value="50S RIBOSOMAL PROTEIN L36 2"/>
    <property type="match status" value="1"/>
</dbReference>
<dbReference type="PANTHER" id="PTHR47781:SF1">
    <property type="entry name" value="LARGE RIBOSOMAL SUBUNIT PROTEIN BL36B"/>
    <property type="match status" value="1"/>
</dbReference>
<dbReference type="Pfam" id="PF00444">
    <property type="entry name" value="Ribosomal_L36"/>
    <property type="match status" value="1"/>
</dbReference>
<dbReference type="SUPFAM" id="SSF57840">
    <property type="entry name" value="Ribosomal protein L36"/>
    <property type="match status" value="1"/>
</dbReference>
<gene>
    <name evidence="1" type="primary">rpmJ</name>
    <name type="ordered locus">M446_5210</name>
</gene>
<name>RL36_METS4</name>
<accession>B0ULQ6</accession>
<comment type="similarity">
    <text evidence="1">Belongs to the bacterial ribosomal protein bL36 family.</text>
</comment>
<sequence>MKIRNSLKSLRGRHRDNQLVRRKGRVYVINKTQKRYKARQG</sequence>
<keyword id="KW-0687">Ribonucleoprotein</keyword>
<keyword id="KW-0689">Ribosomal protein</keyword>